<feature type="chain" id="PRO_0000411866" description="Probable Xaa-Pro aminopeptidase pepP">
    <location>
        <begin position="1"/>
        <end position="466"/>
    </location>
</feature>
<feature type="binding site" evidence="1">
    <location>
        <position position="264"/>
    </location>
    <ligand>
        <name>Mn(2+)</name>
        <dbReference type="ChEBI" id="CHEBI:29035"/>
        <label>2</label>
    </ligand>
</feature>
<feature type="binding site" evidence="1">
    <location>
        <position position="275"/>
    </location>
    <ligand>
        <name>Mn(2+)</name>
        <dbReference type="ChEBI" id="CHEBI:29035"/>
        <label>1</label>
    </ligand>
</feature>
<feature type="binding site" evidence="1">
    <location>
        <position position="275"/>
    </location>
    <ligand>
        <name>Mn(2+)</name>
        <dbReference type="ChEBI" id="CHEBI:29035"/>
        <label>2</label>
    </ligand>
</feature>
<feature type="binding site" evidence="1">
    <location>
        <position position="398"/>
    </location>
    <ligand>
        <name>Mn(2+)</name>
        <dbReference type="ChEBI" id="CHEBI:29035"/>
        <label>1</label>
    </ligand>
</feature>
<feature type="binding site" evidence="1">
    <location>
        <position position="438"/>
    </location>
    <ligand>
        <name>Mn(2+)</name>
        <dbReference type="ChEBI" id="CHEBI:29035"/>
        <label>1</label>
    </ligand>
</feature>
<feature type="binding site" evidence="1">
    <location>
        <position position="438"/>
    </location>
    <ligand>
        <name>Mn(2+)</name>
        <dbReference type="ChEBI" id="CHEBI:29035"/>
        <label>2</label>
    </ligand>
</feature>
<proteinExistence type="inferred from homology"/>
<protein>
    <recommendedName>
        <fullName>Probable Xaa-Pro aminopeptidase pepP</fullName>
        <ecNumber>3.4.11.9</ecNumber>
    </recommendedName>
    <alternativeName>
        <fullName>Aminoacylproline aminopeptidase</fullName>
    </alternativeName>
    <alternativeName>
        <fullName>Prolidase</fullName>
    </alternativeName>
</protein>
<gene>
    <name type="primary">pepP</name>
    <name type="ORF">An05g00050</name>
</gene>
<comment type="function">
    <text evidence="1">Catalyzes the removal of a penultimate prolyl residue from the N-termini of peptides.</text>
</comment>
<comment type="catalytic activity">
    <reaction>
        <text>Release of any N-terminal amino acid, including proline, that is linked to proline, even from a dipeptide or tripeptide.</text>
        <dbReference type="EC" id="3.4.11.9"/>
    </reaction>
</comment>
<comment type="cofactor">
    <cofactor evidence="1">
        <name>Mn(2+)</name>
        <dbReference type="ChEBI" id="CHEBI:29035"/>
    </cofactor>
    <text evidence="1">Binds 2 manganese ions per subunit.</text>
</comment>
<comment type="similarity">
    <text evidence="2">Belongs to the peptidase M24B family.</text>
</comment>
<reference key="1">
    <citation type="journal article" date="2007" name="Nat. Biotechnol.">
        <title>Genome sequencing and analysis of the versatile cell factory Aspergillus niger CBS 513.88.</title>
        <authorList>
            <person name="Pel H.J."/>
            <person name="de Winde J.H."/>
            <person name="Archer D.B."/>
            <person name="Dyer P.S."/>
            <person name="Hofmann G."/>
            <person name="Schaap P.J."/>
            <person name="Turner G."/>
            <person name="de Vries R.P."/>
            <person name="Albang R."/>
            <person name="Albermann K."/>
            <person name="Andersen M.R."/>
            <person name="Bendtsen J.D."/>
            <person name="Benen J.A.E."/>
            <person name="van den Berg M."/>
            <person name="Breestraat S."/>
            <person name="Caddick M.X."/>
            <person name="Contreras R."/>
            <person name="Cornell M."/>
            <person name="Coutinho P.M."/>
            <person name="Danchin E.G.J."/>
            <person name="Debets A.J.M."/>
            <person name="Dekker P."/>
            <person name="van Dijck P.W.M."/>
            <person name="van Dijk A."/>
            <person name="Dijkhuizen L."/>
            <person name="Driessen A.J.M."/>
            <person name="d'Enfert C."/>
            <person name="Geysens S."/>
            <person name="Goosen C."/>
            <person name="Groot G.S.P."/>
            <person name="de Groot P.W.J."/>
            <person name="Guillemette T."/>
            <person name="Henrissat B."/>
            <person name="Herweijer M."/>
            <person name="van den Hombergh J.P.T.W."/>
            <person name="van den Hondel C.A.M.J.J."/>
            <person name="van der Heijden R.T.J.M."/>
            <person name="van der Kaaij R.M."/>
            <person name="Klis F.M."/>
            <person name="Kools H.J."/>
            <person name="Kubicek C.P."/>
            <person name="van Kuyk P.A."/>
            <person name="Lauber J."/>
            <person name="Lu X."/>
            <person name="van der Maarel M.J.E.C."/>
            <person name="Meulenberg R."/>
            <person name="Menke H."/>
            <person name="Mortimer M.A."/>
            <person name="Nielsen J."/>
            <person name="Oliver S.G."/>
            <person name="Olsthoorn M."/>
            <person name="Pal K."/>
            <person name="van Peij N.N.M.E."/>
            <person name="Ram A.F.J."/>
            <person name="Rinas U."/>
            <person name="Roubos J.A."/>
            <person name="Sagt C.M.J."/>
            <person name="Schmoll M."/>
            <person name="Sun J."/>
            <person name="Ussery D."/>
            <person name="Varga J."/>
            <person name="Vervecken W."/>
            <person name="van de Vondervoort P.J.J."/>
            <person name="Wedler H."/>
            <person name="Woesten H.A.B."/>
            <person name="Zeng A.-P."/>
            <person name="van Ooyen A.J.J."/>
            <person name="Visser J."/>
            <person name="Stam H."/>
        </authorList>
    </citation>
    <scope>NUCLEOTIDE SEQUENCE [LARGE SCALE GENOMIC DNA]</scope>
    <source>
        <strain>ATCC MYA-4892 / CBS 513.88 / FGSC A1513</strain>
    </source>
</reference>
<accession>A2QKF6</accession>
<keyword id="KW-0031">Aminopeptidase</keyword>
<keyword id="KW-0378">Hydrolase</keyword>
<keyword id="KW-0464">Manganese</keyword>
<keyword id="KW-0479">Metal-binding</keyword>
<keyword id="KW-0482">Metalloprotease</keyword>
<keyword id="KW-0645">Protease</keyword>
<keyword id="KW-1185">Reference proteome</keyword>
<organism>
    <name type="scientific">Aspergillus niger (strain ATCC MYA-4892 / CBS 513.88 / FGSC A1513)</name>
    <dbReference type="NCBI Taxonomy" id="425011"/>
    <lineage>
        <taxon>Eukaryota</taxon>
        <taxon>Fungi</taxon>
        <taxon>Dikarya</taxon>
        <taxon>Ascomycota</taxon>
        <taxon>Pezizomycotina</taxon>
        <taxon>Eurotiomycetes</taxon>
        <taxon>Eurotiomycetidae</taxon>
        <taxon>Eurotiales</taxon>
        <taxon>Aspergillaceae</taxon>
        <taxon>Aspergillus</taxon>
        <taxon>Aspergillus subgen. Circumdati</taxon>
    </lineage>
</organism>
<sequence length="466" mass="51472">MTTLDSILAGRYPAKAHARRVAERLQVGGSGRNGIIYLEAQKTRLIEDNDEAMHFRQRRPFFYLSGCPLPDSSLIYNIASDKLTLFIPPIDPEDVIWSGLPMSVAEALRLYDVDQVLHTTDVNATLASIASDGNGKSVAFAIEGQITEGIKFDGFLETNTSVLKGAIDSTRVVKDEYEIALLRKANDISAKAHIAAIEASKTATNEREIEAAFLATCIANGARDQAYHPIVACGQNGATLHYGRNDDDLVDPVTKAGKSSVLIDAGAEYRTYCADITRVFPLGGRFTSETQEIYKIVLQMQLEAIAMLKENVQWEDVHAHAHRIAIKGLLKLGILRGSEDELFEKRISVAFFPHGLGHYLGMDTHDTGGNPNYADKDTMFKYLRVRGRLPAGSVITVEPGIYFCRFIIEPYLTSPETSKYIDTNVLEKYWNVGGVRIEDNVHVTQQGYENLTTAPKAIEEVEVLAT</sequence>
<dbReference type="EC" id="3.4.11.9"/>
<dbReference type="EMBL" id="AM270101">
    <property type="protein sequence ID" value="CAK44825.1"/>
    <property type="molecule type" value="Genomic_DNA"/>
</dbReference>
<dbReference type="RefSeq" id="XP_001390579.1">
    <property type="nucleotide sequence ID" value="XM_001390542.2"/>
</dbReference>
<dbReference type="SMR" id="A2QKF6"/>
<dbReference type="EnsemblFungi" id="CAK44825">
    <property type="protein sequence ID" value="CAK44825"/>
    <property type="gene ID" value="An05g00050"/>
</dbReference>
<dbReference type="GeneID" id="4980742"/>
<dbReference type="KEGG" id="ang:An05g00050"/>
<dbReference type="VEuPathDB" id="FungiDB:An05g00050"/>
<dbReference type="HOGENOM" id="CLU_017266_1_2_1"/>
<dbReference type="Proteomes" id="UP000006706">
    <property type="component" value="Chromosome 7L"/>
</dbReference>
<dbReference type="GO" id="GO:0030145">
    <property type="term" value="F:manganese ion binding"/>
    <property type="evidence" value="ECO:0007669"/>
    <property type="project" value="InterPro"/>
</dbReference>
<dbReference type="GO" id="GO:0070006">
    <property type="term" value="F:metalloaminopeptidase activity"/>
    <property type="evidence" value="ECO:0007669"/>
    <property type="project" value="InterPro"/>
</dbReference>
<dbReference type="GO" id="GO:0006508">
    <property type="term" value="P:proteolysis"/>
    <property type="evidence" value="ECO:0007669"/>
    <property type="project" value="UniProtKB-KW"/>
</dbReference>
<dbReference type="CDD" id="cd01087">
    <property type="entry name" value="Prolidase"/>
    <property type="match status" value="1"/>
</dbReference>
<dbReference type="FunFam" id="3.90.230.10:FF:000002">
    <property type="entry name" value="Xaa-Pro aminopeptidase 3"/>
    <property type="match status" value="1"/>
</dbReference>
<dbReference type="Gene3D" id="3.90.230.10">
    <property type="entry name" value="Creatinase/methionine aminopeptidase superfamily"/>
    <property type="match status" value="1"/>
</dbReference>
<dbReference type="Gene3D" id="3.40.350.10">
    <property type="entry name" value="Creatinase/prolidase N-terminal domain"/>
    <property type="match status" value="1"/>
</dbReference>
<dbReference type="InterPro" id="IPR007865">
    <property type="entry name" value="Aminopep_P_N"/>
</dbReference>
<dbReference type="InterPro" id="IPR029149">
    <property type="entry name" value="Creatin/AminoP/Spt16_N"/>
</dbReference>
<dbReference type="InterPro" id="IPR036005">
    <property type="entry name" value="Creatinase/aminopeptidase-like"/>
</dbReference>
<dbReference type="InterPro" id="IPR000994">
    <property type="entry name" value="Pept_M24"/>
</dbReference>
<dbReference type="InterPro" id="IPR052433">
    <property type="entry name" value="X-Pro_dipept-like"/>
</dbReference>
<dbReference type="PANTHER" id="PTHR43226">
    <property type="entry name" value="XAA-PRO AMINOPEPTIDASE 3"/>
    <property type="match status" value="1"/>
</dbReference>
<dbReference type="PANTHER" id="PTHR43226:SF1">
    <property type="entry name" value="XAA-PRO DIPEPTIDASE"/>
    <property type="match status" value="1"/>
</dbReference>
<dbReference type="Pfam" id="PF05195">
    <property type="entry name" value="AMP_N"/>
    <property type="match status" value="1"/>
</dbReference>
<dbReference type="Pfam" id="PF00557">
    <property type="entry name" value="Peptidase_M24"/>
    <property type="match status" value="1"/>
</dbReference>
<dbReference type="SMART" id="SM01011">
    <property type="entry name" value="AMP_N"/>
    <property type="match status" value="1"/>
</dbReference>
<dbReference type="SUPFAM" id="SSF55920">
    <property type="entry name" value="Creatinase/aminopeptidase"/>
    <property type="match status" value="1"/>
</dbReference>
<dbReference type="SUPFAM" id="SSF53092">
    <property type="entry name" value="Creatinase/prolidase N-terminal domain"/>
    <property type="match status" value="1"/>
</dbReference>
<name>AMPP3_ASPNC</name>
<evidence type="ECO:0000250" key="1"/>
<evidence type="ECO:0000305" key="2"/>